<organism>
    <name type="scientific">Pseudomonas fluorescens (strain ATCC BAA-477 / NRRL B-23932 / Pf-5)</name>
    <dbReference type="NCBI Taxonomy" id="220664"/>
    <lineage>
        <taxon>Bacteria</taxon>
        <taxon>Pseudomonadati</taxon>
        <taxon>Pseudomonadota</taxon>
        <taxon>Gammaproteobacteria</taxon>
        <taxon>Pseudomonadales</taxon>
        <taxon>Pseudomonadaceae</taxon>
        <taxon>Pseudomonas</taxon>
    </lineage>
</organism>
<accession>Q4K4E5</accession>
<comment type="similarity">
    <text evidence="1">Belongs to the UPF0301 (AlgH) family.</text>
</comment>
<name>Y5830_PSEF5</name>
<reference key="1">
    <citation type="journal article" date="2005" name="Nat. Biotechnol.">
        <title>Complete genome sequence of the plant commensal Pseudomonas fluorescens Pf-5.</title>
        <authorList>
            <person name="Paulsen I.T."/>
            <person name="Press C.M."/>
            <person name="Ravel J."/>
            <person name="Kobayashi D.Y."/>
            <person name="Myers G.S.A."/>
            <person name="Mavrodi D.V."/>
            <person name="DeBoy R.T."/>
            <person name="Seshadri R."/>
            <person name="Ren Q."/>
            <person name="Madupu R."/>
            <person name="Dodson R.J."/>
            <person name="Durkin A.S."/>
            <person name="Brinkac L.M."/>
            <person name="Daugherty S.C."/>
            <person name="Sullivan S.A."/>
            <person name="Rosovitz M.J."/>
            <person name="Gwinn M.L."/>
            <person name="Zhou L."/>
            <person name="Schneider D.J."/>
            <person name="Cartinhour S.W."/>
            <person name="Nelson W.C."/>
            <person name="Weidman J."/>
            <person name="Watkins K."/>
            <person name="Tran K."/>
            <person name="Khouri H."/>
            <person name="Pierson E.A."/>
            <person name="Pierson L.S. III"/>
            <person name="Thomashow L.S."/>
            <person name="Loper J.E."/>
        </authorList>
    </citation>
    <scope>NUCLEOTIDE SEQUENCE [LARGE SCALE GENOMIC DNA]</scope>
    <source>
        <strain>ATCC BAA-477 / NRRL B-23932 / Pf-5</strain>
    </source>
</reference>
<proteinExistence type="inferred from homology"/>
<dbReference type="EMBL" id="CP000076">
    <property type="protein sequence ID" value="AAY95020.2"/>
    <property type="molecule type" value="Genomic_DNA"/>
</dbReference>
<dbReference type="RefSeq" id="WP_011064004.1">
    <property type="nucleotide sequence ID" value="NC_004129.6"/>
</dbReference>
<dbReference type="SMR" id="Q4K4E5"/>
<dbReference type="STRING" id="220664.PFL_5830"/>
<dbReference type="KEGG" id="pfl:PFL_5830"/>
<dbReference type="PATRIC" id="fig|220664.5.peg.5944"/>
<dbReference type="eggNOG" id="COG1678">
    <property type="taxonomic scope" value="Bacteria"/>
</dbReference>
<dbReference type="HOGENOM" id="CLU_057596_1_0_6"/>
<dbReference type="Proteomes" id="UP000008540">
    <property type="component" value="Chromosome"/>
</dbReference>
<dbReference type="GO" id="GO:0005829">
    <property type="term" value="C:cytosol"/>
    <property type="evidence" value="ECO:0007669"/>
    <property type="project" value="TreeGrafter"/>
</dbReference>
<dbReference type="Gene3D" id="3.40.1740.10">
    <property type="entry name" value="VC0467-like"/>
    <property type="match status" value="1"/>
</dbReference>
<dbReference type="HAMAP" id="MF_00758">
    <property type="entry name" value="UPF0301"/>
    <property type="match status" value="1"/>
</dbReference>
<dbReference type="InterPro" id="IPR003774">
    <property type="entry name" value="AlgH-like"/>
</dbReference>
<dbReference type="NCBIfam" id="NF001266">
    <property type="entry name" value="PRK00228.1-1"/>
    <property type="match status" value="1"/>
</dbReference>
<dbReference type="PANTHER" id="PTHR30327">
    <property type="entry name" value="UNCHARACTERIZED PROTEIN YQGE"/>
    <property type="match status" value="1"/>
</dbReference>
<dbReference type="PANTHER" id="PTHR30327:SF1">
    <property type="entry name" value="UPF0301 PROTEIN YQGE"/>
    <property type="match status" value="1"/>
</dbReference>
<dbReference type="Pfam" id="PF02622">
    <property type="entry name" value="DUF179"/>
    <property type="match status" value="1"/>
</dbReference>
<dbReference type="SUPFAM" id="SSF143456">
    <property type="entry name" value="VC0467-like"/>
    <property type="match status" value="1"/>
</dbReference>
<evidence type="ECO:0000255" key="1">
    <source>
        <dbReference type="HAMAP-Rule" id="MF_00758"/>
    </source>
</evidence>
<sequence>MKNVSPSYLKHHFLIAMPHMADPNFAQTLTYIVEHNASGAMGLVVNRPQDLNLADILEQLRPDQEPSLLCQHVPIFSGGPVQTDRGFVLHPNGPVYQATVELEGLSLSTSQDVLFAIADGVGPAKSLIALGYAGWEAGQLEAELADNAWLTCPFDADILFNTSSELRLEAAARHLGVNLSLLTSQAGHA</sequence>
<feature type="chain" id="PRO_0000258856" description="UPF0301 protein PFL_5830">
    <location>
        <begin position="1"/>
        <end position="189"/>
    </location>
</feature>
<protein>
    <recommendedName>
        <fullName evidence="1">UPF0301 protein PFL_5830</fullName>
    </recommendedName>
</protein>
<gene>
    <name type="ordered locus">PFL_5830</name>
</gene>